<organism>
    <name type="scientific">Shewanella oneidensis (strain ATCC 700550 / JCM 31522 / CIP 106686 / LMG 19005 / NCIMB 14063 / MR-1)</name>
    <dbReference type="NCBI Taxonomy" id="211586"/>
    <lineage>
        <taxon>Bacteria</taxon>
        <taxon>Pseudomonadati</taxon>
        <taxon>Pseudomonadota</taxon>
        <taxon>Gammaproteobacteria</taxon>
        <taxon>Alteromonadales</taxon>
        <taxon>Shewanellaceae</taxon>
        <taxon>Shewanella</taxon>
    </lineage>
</organism>
<name>HIS4_SHEON</name>
<proteinExistence type="inferred from homology"/>
<protein>
    <recommendedName>
        <fullName evidence="1">1-(5-phosphoribosyl)-5-[(5-phosphoribosylamino)methylideneamino] imidazole-4-carboxamide isomerase</fullName>
        <ecNumber evidence="1">5.3.1.16</ecNumber>
    </recommendedName>
    <alternativeName>
        <fullName evidence="1">Phosphoribosylformimino-5-aminoimidazole carboxamide ribotide isomerase</fullName>
    </alternativeName>
</protein>
<comment type="catalytic activity">
    <reaction evidence="1">
        <text>1-(5-phospho-beta-D-ribosyl)-5-[(5-phospho-beta-D-ribosylamino)methylideneamino]imidazole-4-carboxamide = 5-[(5-phospho-1-deoxy-D-ribulos-1-ylimino)methylamino]-1-(5-phospho-beta-D-ribosyl)imidazole-4-carboxamide</text>
        <dbReference type="Rhea" id="RHEA:15469"/>
        <dbReference type="ChEBI" id="CHEBI:58435"/>
        <dbReference type="ChEBI" id="CHEBI:58525"/>
        <dbReference type="EC" id="5.3.1.16"/>
    </reaction>
</comment>
<comment type="pathway">
    <text evidence="1">Amino-acid biosynthesis; L-histidine biosynthesis; L-histidine from 5-phospho-alpha-D-ribose 1-diphosphate: step 4/9.</text>
</comment>
<comment type="subcellular location">
    <subcellularLocation>
        <location evidence="1">Cytoplasm</location>
    </subcellularLocation>
</comment>
<comment type="similarity">
    <text evidence="1">Belongs to the HisA/HisF family.</text>
</comment>
<keyword id="KW-0028">Amino-acid biosynthesis</keyword>
<keyword id="KW-0963">Cytoplasm</keyword>
<keyword id="KW-0368">Histidine biosynthesis</keyword>
<keyword id="KW-0413">Isomerase</keyword>
<keyword id="KW-1185">Reference proteome</keyword>
<feature type="chain" id="PRO_0000142050" description="1-(5-phosphoribosyl)-5-[(5-phosphoribosylamino)methylideneamino] imidazole-4-carboxamide isomerase">
    <location>
        <begin position="1"/>
        <end position="245"/>
    </location>
</feature>
<feature type="active site" description="Proton acceptor" evidence="1">
    <location>
        <position position="7"/>
    </location>
</feature>
<feature type="active site" description="Proton donor" evidence="1">
    <location>
        <position position="129"/>
    </location>
</feature>
<reference key="1">
    <citation type="journal article" date="2002" name="Nat. Biotechnol.">
        <title>Genome sequence of the dissimilatory metal ion-reducing bacterium Shewanella oneidensis.</title>
        <authorList>
            <person name="Heidelberg J.F."/>
            <person name="Paulsen I.T."/>
            <person name="Nelson K.E."/>
            <person name="Gaidos E.J."/>
            <person name="Nelson W.C."/>
            <person name="Read T.D."/>
            <person name="Eisen J.A."/>
            <person name="Seshadri R."/>
            <person name="Ward N.L."/>
            <person name="Methe B.A."/>
            <person name="Clayton R.A."/>
            <person name="Meyer T."/>
            <person name="Tsapin A."/>
            <person name="Scott J."/>
            <person name="Beanan M.J."/>
            <person name="Brinkac L.M."/>
            <person name="Daugherty S.C."/>
            <person name="DeBoy R.T."/>
            <person name="Dodson R.J."/>
            <person name="Durkin A.S."/>
            <person name="Haft D.H."/>
            <person name="Kolonay J.F."/>
            <person name="Madupu R."/>
            <person name="Peterson J.D."/>
            <person name="Umayam L.A."/>
            <person name="White O."/>
            <person name="Wolf A.M."/>
            <person name="Vamathevan J.J."/>
            <person name="Weidman J.F."/>
            <person name="Impraim M."/>
            <person name="Lee K."/>
            <person name="Berry K.J."/>
            <person name="Lee C."/>
            <person name="Mueller J."/>
            <person name="Khouri H.M."/>
            <person name="Gill J."/>
            <person name="Utterback T.R."/>
            <person name="McDonald L.A."/>
            <person name="Feldblyum T.V."/>
            <person name="Smith H.O."/>
            <person name="Venter J.C."/>
            <person name="Nealson K.H."/>
            <person name="Fraser C.M."/>
        </authorList>
    </citation>
    <scope>NUCLEOTIDE SEQUENCE [LARGE SCALE GENOMIC DNA]</scope>
    <source>
        <strain>ATCC 700550 / JCM 31522 / CIP 106686 / LMG 19005 / NCIMB 14063 / MR-1</strain>
    </source>
</reference>
<gene>
    <name evidence="1" type="primary">hisA</name>
    <name type="ordered locus">SO_2069</name>
</gene>
<accession>Q8EFB5</accession>
<evidence type="ECO:0000255" key="1">
    <source>
        <dbReference type="HAMAP-Rule" id="MF_01014"/>
    </source>
</evidence>
<dbReference type="EC" id="5.3.1.16" evidence="1"/>
<dbReference type="EMBL" id="AE014299">
    <property type="protein sequence ID" value="AAN55116.1"/>
    <property type="molecule type" value="Genomic_DNA"/>
</dbReference>
<dbReference type="RefSeq" id="NP_717672.1">
    <property type="nucleotide sequence ID" value="NC_004347.2"/>
</dbReference>
<dbReference type="RefSeq" id="WP_011072136.1">
    <property type="nucleotide sequence ID" value="NC_004347.2"/>
</dbReference>
<dbReference type="SMR" id="Q8EFB5"/>
<dbReference type="STRING" id="211586.SO_2069"/>
<dbReference type="PaxDb" id="211586-SO_2069"/>
<dbReference type="KEGG" id="son:SO_2069"/>
<dbReference type="PATRIC" id="fig|211586.12.peg.1987"/>
<dbReference type="eggNOG" id="COG0106">
    <property type="taxonomic scope" value="Bacteria"/>
</dbReference>
<dbReference type="HOGENOM" id="CLU_048577_1_2_6"/>
<dbReference type="OrthoDB" id="9807749at2"/>
<dbReference type="PhylomeDB" id="Q8EFB5"/>
<dbReference type="BioCyc" id="SONE211586:G1GMP-1902-MONOMER"/>
<dbReference type="UniPathway" id="UPA00031">
    <property type="reaction ID" value="UER00009"/>
</dbReference>
<dbReference type="Proteomes" id="UP000008186">
    <property type="component" value="Chromosome"/>
</dbReference>
<dbReference type="GO" id="GO:0005737">
    <property type="term" value="C:cytoplasm"/>
    <property type="evidence" value="ECO:0000318"/>
    <property type="project" value="GO_Central"/>
</dbReference>
<dbReference type="GO" id="GO:0003949">
    <property type="term" value="F:1-(5-phosphoribosyl)-5-[(5-phosphoribosylamino)methylideneamino]imidazole-4-carboxamide isomerase activity"/>
    <property type="evidence" value="ECO:0000318"/>
    <property type="project" value="GO_Central"/>
</dbReference>
<dbReference type="GO" id="GO:0000105">
    <property type="term" value="P:L-histidine biosynthetic process"/>
    <property type="evidence" value="ECO:0000318"/>
    <property type="project" value="GO_Central"/>
</dbReference>
<dbReference type="CDD" id="cd04732">
    <property type="entry name" value="HisA"/>
    <property type="match status" value="1"/>
</dbReference>
<dbReference type="FunFam" id="3.20.20.70:FF:000009">
    <property type="entry name" value="1-(5-phosphoribosyl)-5-[(5-phosphoribosylamino)methylideneamino] imidazole-4-carboxamide isomerase"/>
    <property type="match status" value="1"/>
</dbReference>
<dbReference type="Gene3D" id="3.20.20.70">
    <property type="entry name" value="Aldolase class I"/>
    <property type="match status" value="1"/>
</dbReference>
<dbReference type="HAMAP" id="MF_01014">
    <property type="entry name" value="HisA"/>
    <property type="match status" value="1"/>
</dbReference>
<dbReference type="InterPro" id="IPR013785">
    <property type="entry name" value="Aldolase_TIM"/>
</dbReference>
<dbReference type="InterPro" id="IPR006062">
    <property type="entry name" value="His_biosynth"/>
</dbReference>
<dbReference type="InterPro" id="IPR006063">
    <property type="entry name" value="HisA_bact_arch"/>
</dbReference>
<dbReference type="InterPro" id="IPR044524">
    <property type="entry name" value="Isoase_HisA-like"/>
</dbReference>
<dbReference type="InterPro" id="IPR023016">
    <property type="entry name" value="Isoase_HisA-like_bact"/>
</dbReference>
<dbReference type="InterPro" id="IPR011060">
    <property type="entry name" value="RibuloseP-bd_barrel"/>
</dbReference>
<dbReference type="NCBIfam" id="TIGR00007">
    <property type="entry name" value="1-(5-phosphoribosyl)-5-[(5-phosphoribosylamino)methylideneamino]imidazole-4-carboxamide isomerase"/>
    <property type="match status" value="1"/>
</dbReference>
<dbReference type="PANTHER" id="PTHR43090">
    <property type="entry name" value="1-(5-PHOSPHORIBOSYL)-5-[(5-PHOSPHORIBOSYLAMINO)METHYLIDENEAMINO] IMIDAZOLE-4-CARBOXAMIDE ISOMERASE"/>
    <property type="match status" value="1"/>
</dbReference>
<dbReference type="PANTHER" id="PTHR43090:SF2">
    <property type="entry name" value="1-(5-PHOSPHORIBOSYL)-5-[(5-PHOSPHORIBOSYLAMINO)METHYLIDENEAMINO] IMIDAZOLE-4-CARBOXAMIDE ISOMERASE"/>
    <property type="match status" value="1"/>
</dbReference>
<dbReference type="Pfam" id="PF00977">
    <property type="entry name" value="His_biosynth"/>
    <property type="match status" value="1"/>
</dbReference>
<dbReference type="SUPFAM" id="SSF51366">
    <property type="entry name" value="Ribulose-phoshate binding barrel"/>
    <property type="match status" value="1"/>
</dbReference>
<sequence>MIIPAIDLIDGKVVRLYQGDYGQQTTFDLSPLAQLQSYQAQDASWLHIVDLTGAKDPAKRQTALIAALTAGLSANIQVGGGIRTEEQVAELLSLGVKRVVIGSLAVKEPELVKGWFNKFGNEAICLALDINITPSGEKIVAVSGWQNGGGKNLESIVEDFSQVGLKHALVTDISRDGTLTGANTELYCELSSRYPNIAWQASGGIASLEDVAAVRDSGAAGIIIGKALLINQFNVAEAIQCWPNE</sequence>